<keyword id="KW-0010">Activator</keyword>
<keyword id="KW-0025">Alternative splicing</keyword>
<keyword id="KW-0238">DNA-binding</keyword>
<keyword id="KW-0939">Gibberellin signaling pathway</keyword>
<keyword id="KW-0479">Metal-binding</keyword>
<keyword id="KW-0539">Nucleus</keyword>
<keyword id="KW-0597">Phosphoprotein</keyword>
<keyword id="KW-1185">Reference proteome</keyword>
<keyword id="KW-0677">Repeat</keyword>
<keyword id="KW-0804">Transcription</keyword>
<keyword id="KW-0805">Transcription regulation</keyword>
<keyword id="KW-0862">Zinc</keyword>
<keyword id="KW-0863">Zinc-finger</keyword>
<dbReference type="EMBL" id="AY568648">
    <property type="protein sequence ID" value="AAS79538.1"/>
    <property type="molecule type" value="mRNA"/>
</dbReference>
<dbReference type="EMBL" id="AJ630476">
    <property type="protein sequence ID" value="CAG25849.1"/>
    <property type="molecule type" value="mRNA"/>
</dbReference>
<dbReference type="EMBL" id="AC003027">
    <property type="protein sequence ID" value="AAD10684.1"/>
    <property type="molecule type" value="Genomic_DNA"/>
</dbReference>
<dbReference type="EMBL" id="CP002684">
    <property type="protein sequence ID" value="AEE27620.1"/>
    <property type="molecule type" value="Genomic_DNA"/>
</dbReference>
<dbReference type="EMBL" id="CP002684">
    <property type="protein sequence ID" value="AEE27621.1"/>
    <property type="molecule type" value="Genomic_DNA"/>
</dbReference>
<dbReference type="EMBL" id="BT006209">
    <property type="protein sequence ID" value="AAP12858.1"/>
    <property type="molecule type" value="mRNA"/>
</dbReference>
<dbReference type="EMBL" id="AK227837">
    <property type="protein sequence ID" value="BAE99815.1"/>
    <property type="molecule type" value="mRNA"/>
</dbReference>
<dbReference type="PIR" id="A86169">
    <property type="entry name" value="A86169"/>
</dbReference>
<dbReference type="RefSeq" id="NP_001030951.1">
    <molecule id="Q9ZWA6-2"/>
    <property type="nucleotide sequence ID" value="NM_001035874.1"/>
</dbReference>
<dbReference type="RefSeq" id="NP_171880.1">
    <molecule id="Q9ZWA6-1"/>
    <property type="nucleotide sequence ID" value="NM_100263.4"/>
</dbReference>
<dbReference type="BioGRID" id="24631">
    <property type="interactions" value="6"/>
</dbReference>
<dbReference type="FunCoup" id="Q9ZWA6">
    <property type="interactions" value="506"/>
</dbReference>
<dbReference type="IntAct" id="Q9ZWA6">
    <property type="interactions" value="7"/>
</dbReference>
<dbReference type="STRING" id="3702.Q9ZWA6"/>
<dbReference type="iPTMnet" id="Q9ZWA6"/>
<dbReference type="PaxDb" id="3702-AT1G03840.1"/>
<dbReference type="ProteomicsDB" id="228784">
    <molecule id="Q9ZWA6-1"/>
</dbReference>
<dbReference type="EnsemblPlants" id="AT1G03840.1">
    <molecule id="Q9ZWA6-1"/>
    <property type="protein sequence ID" value="AT1G03840.1"/>
    <property type="gene ID" value="AT1G03840"/>
</dbReference>
<dbReference type="EnsemblPlants" id="AT1G03840.2">
    <molecule id="Q9ZWA6-2"/>
    <property type="protein sequence ID" value="AT1G03840.2"/>
    <property type="gene ID" value="AT1G03840"/>
</dbReference>
<dbReference type="GeneID" id="839396"/>
<dbReference type="Gramene" id="AT1G03840.1">
    <molecule id="Q9ZWA6-1"/>
    <property type="protein sequence ID" value="AT1G03840.1"/>
    <property type="gene ID" value="AT1G03840"/>
</dbReference>
<dbReference type="Gramene" id="AT1G03840.2">
    <molecule id="Q9ZWA6-2"/>
    <property type="protein sequence ID" value="AT1G03840.2"/>
    <property type="gene ID" value="AT1G03840"/>
</dbReference>
<dbReference type="KEGG" id="ath:AT1G03840"/>
<dbReference type="Araport" id="AT1G03840"/>
<dbReference type="TAIR" id="AT1G03840">
    <property type="gene designation" value="MGP"/>
</dbReference>
<dbReference type="eggNOG" id="KOG1721">
    <property type="taxonomic scope" value="Eukaryota"/>
</dbReference>
<dbReference type="HOGENOM" id="CLU_014578_3_1_1"/>
<dbReference type="InParanoid" id="Q9ZWA6"/>
<dbReference type="OMA" id="SNGFMQN"/>
<dbReference type="PhylomeDB" id="Q9ZWA6"/>
<dbReference type="PRO" id="PR:Q9ZWA6"/>
<dbReference type="Proteomes" id="UP000006548">
    <property type="component" value="Chromosome 1"/>
</dbReference>
<dbReference type="ExpressionAtlas" id="Q9ZWA6">
    <property type="expression patterns" value="baseline and differential"/>
</dbReference>
<dbReference type="GO" id="GO:0005634">
    <property type="term" value="C:nucleus"/>
    <property type="evidence" value="ECO:0000314"/>
    <property type="project" value="UniProtKB"/>
</dbReference>
<dbReference type="GO" id="GO:0003700">
    <property type="term" value="F:DNA-binding transcription factor activity"/>
    <property type="evidence" value="ECO:0000314"/>
    <property type="project" value="UniProtKB"/>
</dbReference>
<dbReference type="GO" id="GO:0043565">
    <property type="term" value="F:sequence-specific DNA binding"/>
    <property type="evidence" value="ECO:0000314"/>
    <property type="project" value="UniProtKB"/>
</dbReference>
<dbReference type="GO" id="GO:0000976">
    <property type="term" value="F:transcription cis-regulatory region binding"/>
    <property type="evidence" value="ECO:0000353"/>
    <property type="project" value="TAIR"/>
</dbReference>
<dbReference type="GO" id="GO:0008270">
    <property type="term" value="F:zinc ion binding"/>
    <property type="evidence" value="ECO:0007669"/>
    <property type="project" value="UniProtKB-KW"/>
</dbReference>
<dbReference type="GO" id="GO:0008356">
    <property type="term" value="P:asymmetric cell division"/>
    <property type="evidence" value="ECO:0000315"/>
    <property type="project" value="TAIR"/>
</dbReference>
<dbReference type="GO" id="GO:0009740">
    <property type="term" value="P:gibberellic acid mediated signaling pathway"/>
    <property type="evidence" value="ECO:0007669"/>
    <property type="project" value="UniProtKB-KW"/>
</dbReference>
<dbReference type="GO" id="GO:0045893">
    <property type="term" value="P:positive regulation of DNA-templated transcription"/>
    <property type="evidence" value="ECO:0000314"/>
    <property type="project" value="UniProtKB"/>
</dbReference>
<dbReference type="GO" id="GO:0009939">
    <property type="term" value="P:positive regulation of gibberellic acid mediated signaling pathway"/>
    <property type="evidence" value="ECO:0000315"/>
    <property type="project" value="UniProtKB"/>
</dbReference>
<dbReference type="GO" id="GO:0034504">
    <property type="term" value="P:protein localization to nucleus"/>
    <property type="evidence" value="ECO:0000315"/>
    <property type="project" value="UniProtKB"/>
</dbReference>
<dbReference type="GO" id="GO:0006355">
    <property type="term" value="P:regulation of DNA-templated transcription"/>
    <property type="evidence" value="ECO:0000304"/>
    <property type="project" value="TAIR"/>
</dbReference>
<dbReference type="GO" id="GO:0010075">
    <property type="term" value="P:regulation of meristem growth"/>
    <property type="evidence" value="ECO:0000315"/>
    <property type="project" value="UniProtKB"/>
</dbReference>
<dbReference type="GO" id="GO:0048364">
    <property type="term" value="P:root development"/>
    <property type="evidence" value="ECO:0000316"/>
    <property type="project" value="TAIR"/>
</dbReference>
<dbReference type="FunFam" id="3.30.160.60:FF:000554">
    <property type="entry name" value="protein indeterminate-domain 12-like"/>
    <property type="match status" value="1"/>
</dbReference>
<dbReference type="FunFam" id="3.30.160.60:FF:000131">
    <property type="entry name" value="protein indeterminate-domain 5, chloroplastic-like"/>
    <property type="match status" value="1"/>
</dbReference>
<dbReference type="Gene3D" id="3.30.160.60">
    <property type="entry name" value="Classic Zinc Finger"/>
    <property type="match status" value="2"/>
</dbReference>
<dbReference type="InterPro" id="IPR055187">
    <property type="entry name" value="C2CH-3rd_BIRD-IDD"/>
</dbReference>
<dbReference type="InterPro" id="IPR055185">
    <property type="entry name" value="C2CH-4th_BIRD-IDD"/>
</dbReference>
<dbReference type="InterPro" id="IPR055186">
    <property type="entry name" value="C2H2-2nd_BIRD-IDD"/>
</dbReference>
<dbReference type="InterPro" id="IPR031140">
    <property type="entry name" value="IDD1-16"/>
</dbReference>
<dbReference type="InterPro" id="IPR036236">
    <property type="entry name" value="Znf_C2H2_sf"/>
</dbReference>
<dbReference type="InterPro" id="IPR013087">
    <property type="entry name" value="Znf_C2H2_type"/>
</dbReference>
<dbReference type="PANTHER" id="PTHR10593">
    <property type="entry name" value="SERINE/THREONINE-PROTEIN KINASE RIO"/>
    <property type="match status" value="1"/>
</dbReference>
<dbReference type="PANTHER" id="PTHR10593:SF148">
    <property type="entry name" value="ZINC FINGER PROTEIN MAGPIE"/>
    <property type="match status" value="1"/>
</dbReference>
<dbReference type="Pfam" id="PF22995">
    <property type="entry name" value="C2CH-3rd_BIRD-IDD"/>
    <property type="match status" value="1"/>
</dbReference>
<dbReference type="Pfam" id="PF22992">
    <property type="entry name" value="C2CH-4th_BIRD-IDD"/>
    <property type="match status" value="1"/>
</dbReference>
<dbReference type="Pfam" id="PF22996">
    <property type="entry name" value="C2H2-2nd_BIRD-IDD"/>
    <property type="match status" value="1"/>
</dbReference>
<dbReference type="Pfam" id="PF00096">
    <property type="entry name" value="zf-C2H2"/>
    <property type="match status" value="1"/>
</dbReference>
<dbReference type="SUPFAM" id="SSF57667">
    <property type="entry name" value="beta-beta-alpha zinc fingers"/>
    <property type="match status" value="1"/>
</dbReference>
<dbReference type="PROSITE" id="PS00028">
    <property type="entry name" value="ZINC_FINGER_C2H2_1"/>
    <property type="match status" value="1"/>
</dbReference>
<dbReference type="PROSITE" id="PS50157">
    <property type="entry name" value="ZINC_FINGER_C2H2_2"/>
    <property type="match status" value="1"/>
</dbReference>
<gene>
    <name evidence="14" type="primary">MGP</name>
    <name evidence="13" type="synonym">IDD3</name>
    <name evidence="16" type="synonym">PSG3</name>
    <name evidence="17" type="ordered locus">At1g03840</name>
    <name evidence="18" type="ORF">F11M21.23</name>
</gene>
<organism>
    <name type="scientific">Arabidopsis thaliana</name>
    <name type="common">Mouse-ear cress</name>
    <dbReference type="NCBI Taxonomy" id="3702"/>
    <lineage>
        <taxon>Eukaryota</taxon>
        <taxon>Viridiplantae</taxon>
        <taxon>Streptophyta</taxon>
        <taxon>Embryophyta</taxon>
        <taxon>Tracheophyta</taxon>
        <taxon>Spermatophyta</taxon>
        <taxon>Magnoliopsida</taxon>
        <taxon>eudicotyledons</taxon>
        <taxon>Gunneridae</taxon>
        <taxon>Pentapetalae</taxon>
        <taxon>rosids</taxon>
        <taxon>malvids</taxon>
        <taxon>Brassicales</taxon>
        <taxon>Brassicaceae</taxon>
        <taxon>Camelineae</taxon>
        <taxon>Arabidopsis</taxon>
    </lineage>
</organism>
<proteinExistence type="evidence at protein level"/>
<comment type="function">
    <text evidence="6 9 10 11">Transcription factor that regulates tissue boundaries and asymmetric cell division (PubMed:17785527, PubMed:25829440). Contributes to the sequestration of 'SHORT-ROOT' to the nucleus (PubMed:17785527, PubMed:25829440). Interacts with the SCR and MGP promoters (PubMed:21935722). Does not show transcription activity by itself, but regulates the transcription of downstream genes through interaction with other transcription factors (PubMed:21935722). Binds DNA via its zinc fingers (PubMed:24821766). Recognizes and binds to SCL3 promoter sequence 5'-AGACAA-3' to promote its expression when in complex with RGA (PubMed:24821766). Positively involved in gibberellic acid (GA) signaling (PubMed:24821766).</text>
</comment>
<comment type="subunit">
    <text evidence="6 8 10">Interacts with SHR, SCR and JKD, but not with itself (PubMed:17785527). Interacts with SIEL (PubMed:21924907). Binds to RGA and SCL3 competitively in the nucleus (PubMed:24821766).</text>
</comment>
<comment type="interaction">
    <interactant intactId="EBI-1568600">
        <id>Q9ZWA6</id>
    </interactant>
    <interactant intactId="EBI-1568562">
        <id>Q700D2</id>
        <label>JKD</label>
    </interactant>
    <organismsDiffer>false</organismsDiffer>
    <experiments>3</experiments>
</comment>
<comment type="interaction">
    <interactant intactId="EBI-1568600">
        <id>Q9ZWA6</id>
    </interactant>
    <interactant intactId="EBI-15196807">
        <id>Q9SN22</id>
        <label>SCL32</label>
    </interactant>
    <organismsDiffer>false</organismsDiffer>
    <experiments>3</experiments>
</comment>
<comment type="interaction">
    <interactant intactId="EBI-1568600">
        <id>Q9ZWA6</id>
    </interactant>
    <interactant intactId="EBI-1250484">
        <id>Q9M384</id>
        <label>SCR</label>
    </interactant>
    <organismsDiffer>false</organismsDiffer>
    <experiments>3</experiments>
</comment>
<comment type="subcellular location">
    <subcellularLocation>
        <location evidence="4 6 10">Nucleus</location>
    </subcellularLocation>
</comment>
<comment type="alternative products">
    <event type="alternative splicing"/>
    <isoform>
        <id>Q9ZWA6-1</id>
        <name>1</name>
        <sequence type="displayed"/>
    </isoform>
    <isoform>
        <id>Q9ZWA6-2</id>
        <name>2</name>
        <sequence type="described" ref="VSP_036332"/>
    </isoform>
</comment>
<comment type="tissue specificity">
    <text evidence="6 11">Expressed in the ground tissue and stele cells of embryos and 2-days post-germination roots but not in the quiescent center (PubMed:17785527). Detected only in cells that perform asymmetric cell divisions (PubMed:17785527). In roots, present in cortex, endodermis, and pericycle layer (PubMed:25829440).</text>
</comment>
<comment type="induction">
    <text evidence="9">Up-regulated by the transcription factor JKD, and down-regulated by SHR, SCR and itself.</text>
</comment>
<comment type="disruption phenotype">
    <text evidence="7 11">No visible phenotype (PubMed:21265895, PubMed:25829440). Roots of the triple mutant jkd mgp nuc contain patches of undivided ground tissue (GT), indicating that cortex and endodermis layers are not fully separated. The quadruple mutant line jkd mgp nuc scr has short root meristems, lacks endodermis and miss Casparian strip (PubMed:25829440).</text>
</comment>
<comment type="miscellaneous">
    <text>MGP expression is SHR- and SCR-dependent.</text>
</comment>
<comment type="miscellaneous">
    <molecule>Isoform 2</molecule>
    <text evidence="16">May be due to a competing acceptor splice site.</text>
</comment>
<reference key="1">
    <citation type="journal article" date="2004" name="Plant Physiol.">
        <title>Genome-wide ORFeome cloning and analysis of Arabidopsis transcription factor genes.</title>
        <authorList>
            <person name="Gong W."/>
            <person name="Shen Y.-P."/>
            <person name="Ma L.-G."/>
            <person name="Pan Y."/>
            <person name="Du Y.-L."/>
            <person name="Wang D.-H."/>
            <person name="Yang J.-Y."/>
            <person name="Hu L.-D."/>
            <person name="Liu X.-F."/>
            <person name="Dong C.-X."/>
            <person name="Ma L."/>
            <person name="Chen Y.-H."/>
            <person name="Yang X.-Y."/>
            <person name="Gao Y."/>
            <person name="Zhu D."/>
            <person name="Tan X."/>
            <person name="Mu J.-Y."/>
            <person name="Zhang D.-B."/>
            <person name="Liu Y.-L."/>
            <person name="Dinesh-Kumar S.P."/>
            <person name="Li Y."/>
            <person name="Wang X.-P."/>
            <person name="Gu H.-Y."/>
            <person name="Qu L.-J."/>
            <person name="Bai S.-N."/>
            <person name="Lu Y.-T."/>
            <person name="Li J.-Y."/>
            <person name="Zhao J.-D."/>
            <person name="Zuo J."/>
            <person name="Huang H."/>
            <person name="Deng X.-W."/>
            <person name="Zhu Y.-X."/>
        </authorList>
    </citation>
    <scope>NUCLEOTIDE SEQUENCE [MRNA] (ISOFORM 2)</scope>
</reference>
<reference key="2">
    <citation type="journal article" date="2000" name="Nature">
        <title>Sequence and analysis of chromosome 1 of the plant Arabidopsis thaliana.</title>
        <authorList>
            <person name="Theologis A."/>
            <person name="Ecker J.R."/>
            <person name="Palm C.J."/>
            <person name="Federspiel N.A."/>
            <person name="Kaul S."/>
            <person name="White O."/>
            <person name="Alonso J."/>
            <person name="Altafi H."/>
            <person name="Araujo R."/>
            <person name="Bowman C.L."/>
            <person name="Brooks S.Y."/>
            <person name="Buehler E."/>
            <person name="Chan A."/>
            <person name="Chao Q."/>
            <person name="Chen H."/>
            <person name="Cheuk R.F."/>
            <person name="Chin C.W."/>
            <person name="Chung M.K."/>
            <person name="Conn L."/>
            <person name="Conway A.B."/>
            <person name="Conway A.R."/>
            <person name="Creasy T.H."/>
            <person name="Dewar K."/>
            <person name="Dunn P."/>
            <person name="Etgu P."/>
            <person name="Feldblyum T.V."/>
            <person name="Feng J.-D."/>
            <person name="Fong B."/>
            <person name="Fujii C.Y."/>
            <person name="Gill J.E."/>
            <person name="Goldsmith A.D."/>
            <person name="Haas B."/>
            <person name="Hansen N.F."/>
            <person name="Hughes B."/>
            <person name="Huizar L."/>
            <person name="Hunter J.L."/>
            <person name="Jenkins J."/>
            <person name="Johnson-Hopson C."/>
            <person name="Khan S."/>
            <person name="Khaykin E."/>
            <person name="Kim C.J."/>
            <person name="Koo H.L."/>
            <person name="Kremenetskaia I."/>
            <person name="Kurtz D.B."/>
            <person name="Kwan A."/>
            <person name="Lam B."/>
            <person name="Langin-Hooper S."/>
            <person name="Lee A."/>
            <person name="Lee J.M."/>
            <person name="Lenz C.A."/>
            <person name="Li J.H."/>
            <person name="Li Y.-P."/>
            <person name="Lin X."/>
            <person name="Liu S.X."/>
            <person name="Liu Z.A."/>
            <person name="Luros J.S."/>
            <person name="Maiti R."/>
            <person name="Marziali A."/>
            <person name="Militscher J."/>
            <person name="Miranda M."/>
            <person name="Nguyen M."/>
            <person name="Nierman W.C."/>
            <person name="Osborne B.I."/>
            <person name="Pai G."/>
            <person name="Peterson J."/>
            <person name="Pham P.K."/>
            <person name="Rizzo M."/>
            <person name="Rooney T."/>
            <person name="Rowley D."/>
            <person name="Sakano H."/>
            <person name="Salzberg S.L."/>
            <person name="Schwartz J.R."/>
            <person name="Shinn P."/>
            <person name="Southwick A.M."/>
            <person name="Sun H."/>
            <person name="Tallon L.J."/>
            <person name="Tambunga G."/>
            <person name="Toriumi M.J."/>
            <person name="Town C.D."/>
            <person name="Utterback T."/>
            <person name="Van Aken S."/>
            <person name="Vaysberg M."/>
            <person name="Vysotskaia V.S."/>
            <person name="Walker M."/>
            <person name="Wu D."/>
            <person name="Yu G."/>
            <person name="Fraser C.M."/>
            <person name="Venter J.C."/>
            <person name="Davis R.W."/>
        </authorList>
    </citation>
    <scope>NUCLEOTIDE SEQUENCE [LARGE SCALE GENOMIC DNA]</scope>
    <source>
        <strain>cv. Columbia</strain>
    </source>
</reference>
<reference key="3">
    <citation type="journal article" date="2017" name="Plant J.">
        <title>Araport11: a complete reannotation of the Arabidopsis thaliana reference genome.</title>
        <authorList>
            <person name="Cheng C.Y."/>
            <person name="Krishnakumar V."/>
            <person name="Chan A.P."/>
            <person name="Thibaud-Nissen F."/>
            <person name="Schobel S."/>
            <person name="Town C.D."/>
        </authorList>
    </citation>
    <scope>GENOME REANNOTATION</scope>
    <source>
        <strain>cv. Columbia</strain>
    </source>
</reference>
<reference key="4">
    <citation type="journal article" date="2003" name="Science">
        <title>Empirical analysis of transcriptional activity in the Arabidopsis genome.</title>
        <authorList>
            <person name="Yamada K."/>
            <person name="Lim J."/>
            <person name="Dale J.M."/>
            <person name="Chen H."/>
            <person name="Shinn P."/>
            <person name="Palm C.J."/>
            <person name="Southwick A.M."/>
            <person name="Wu H.C."/>
            <person name="Kim C.J."/>
            <person name="Nguyen M."/>
            <person name="Pham P.K."/>
            <person name="Cheuk R.F."/>
            <person name="Karlin-Newmann G."/>
            <person name="Liu S.X."/>
            <person name="Lam B."/>
            <person name="Sakano H."/>
            <person name="Wu T."/>
            <person name="Yu G."/>
            <person name="Miranda M."/>
            <person name="Quach H.L."/>
            <person name="Tripp M."/>
            <person name="Chang C.H."/>
            <person name="Lee J.M."/>
            <person name="Toriumi M.J."/>
            <person name="Chan M.M."/>
            <person name="Tang C.C."/>
            <person name="Onodera C.S."/>
            <person name="Deng J.M."/>
            <person name="Akiyama K."/>
            <person name="Ansari Y."/>
            <person name="Arakawa T."/>
            <person name="Banh J."/>
            <person name="Banno F."/>
            <person name="Bowser L."/>
            <person name="Brooks S.Y."/>
            <person name="Carninci P."/>
            <person name="Chao Q."/>
            <person name="Choy N."/>
            <person name="Enju A."/>
            <person name="Goldsmith A.D."/>
            <person name="Gurjal M."/>
            <person name="Hansen N.F."/>
            <person name="Hayashizaki Y."/>
            <person name="Johnson-Hopson C."/>
            <person name="Hsuan V.W."/>
            <person name="Iida K."/>
            <person name="Karnes M."/>
            <person name="Khan S."/>
            <person name="Koesema E."/>
            <person name="Ishida J."/>
            <person name="Jiang P.X."/>
            <person name="Jones T."/>
            <person name="Kawai J."/>
            <person name="Kamiya A."/>
            <person name="Meyers C."/>
            <person name="Nakajima M."/>
            <person name="Narusaka M."/>
            <person name="Seki M."/>
            <person name="Sakurai T."/>
            <person name="Satou M."/>
            <person name="Tamse R."/>
            <person name="Vaysberg M."/>
            <person name="Wallender E.K."/>
            <person name="Wong C."/>
            <person name="Yamamura Y."/>
            <person name="Yuan S."/>
            <person name="Shinozaki K."/>
            <person name="Davis R.W."/>
            <person name="Theologis A."/>
            <person name="Ecker J.R."/>
        </authorList>
    </citation>
    <scope>NUCLEOTIDE SEQUENCE [LARGE SCALE MRNA] (ISOFORM 1)</scope>
    <source>
        <strain>cv. Columbia</strain>
    </source>
</reference>
<reference key="5">
    <citation type="submission" date="2006-07" db="EMBL/GenBank/DDBJ databases">
        <title>Large-scale analysis of RIKEN Arabidopsis full-length (RAFL) cDNAs.</title>
        <authorList>
            <person name="Totoki Y."/>
            <person name="Seki M."/>
            <person name="Ishida J."/>
            <person name="Nakajima M."/>
            <person name="Enju A."/>
            <person name="Kamiya A."/>
            <person name="Narusaka M."/>
            <person name="Shin-i T."/>
            <person name="Nakagawa M."/>
            <person name="Sakamoto N."/>
            <person name="Oishi K."/>
            <person name="Kohara Y."/>
            <person name="Kobayashi M."/>
            <person name="Toyoda A."/>
            <person name="Sakaki Y."/>
            <person name="Sakurai T."/>
            <person name="Iida K."/>
            <person name="Akiyama K."/>
            <person name="Satou M."/>
            <person name="Toyoda T."/>
            <person name="Konagaya A."/>
            <person name="Carninci P."/>
            <person name="Kawai J."/>
            <person name="Hayashizaki Y."/>
            <person name="Shinozaki K."/>
        </authorList>
    </citation>
    <scope>NUCLEOTIDE SEQUENCE [LARGE SCALE MRNA] (ISOFORM 1)</scope>
    <source>
        <strain>cv. Columbia</strain>
    </source>
</reference>
<reference key="6">
    <citation type="journal article" date="2006" name="BMC Genomics">
        <title>The maize INDETERMINATE1 flowering time regulator defines a highly conserved zinc finger protein family in higher plants.</title>
        <authorList>
            <person name="Colasanti J."/>
            <person name="Tremblay R."/>
            <person name="Wong A.Y."/>
            <person name="Coneva V."/>
            <person name="Kozaki A."/>
            <person name="Mable B.K."/>
        </authorList>
    </citation>
    <scope>GENE FAMILY</scope>
    <scope>NOMENCLATURE</scope>
</reference>
<reference key="7">
    <citation type="journal article" date="2006" name="PLoS Biol.">
        <title>Whole-genome analysis of the SHORT-ROOT developmental pathway in Arabidopsis.</title>
        <authorList>
            <person name="Levesque M.P."/>
            <person name="Vernoux T."/>
            <person name="Busch W."/>
            <person name="Cui H."/>
            <person name="Wang J.Y."/>
            <person name="Blilou I."/>
            <person name="Hassan H."/>
            <person name="Nakajima K."/>
            <person name="Matsumoto N."/>
            <person name="Lohmann J.U."/>
            <person name="Scheres B."/>
            <person name="Benfey P.N."/>
        </authorList>
    </citation>
    <scope>INDUCTION BY SHR</scope>
</reference>
<reference key="8">
    <citation type="journal article" date="2007" name="Genes Dev.">
        <title>Arabidopsis JACKDAW and MAGPIE zinc finger proteins delimit asymmetric cell division and stabilize tissue boundaries by restricting SHORT-ROOT action.</title>
        <authorList>
            <person name="Welch D."/>
            <person name="Hassan H."/>
            <person name="Blilou I."/>
            <person name="Immink R."/>
            <person name="Heidstra R."/>
            <person name="Scheres B."/>
        </authorList>
    </citation>
    <scope>FUNCTION</scope>
    <scope>TISSUE SPECIFICITY</scope>
    <scope>SUBCELLULAR LOCATION</scope>
    <scope>INTERACTION WITH SHR; SCR AND JKD</scope>
</reference>
<reference key="9">
    <citation type="journal article" date="2011" name="Plant J.">
        <title>Modulation of sugar metabolism by an INDETERMINATE DOMAIN transcription factor contributes to photoperiodic flowering in Arabidopsis.</title>
        <authorList>
            <person name="Seo P.J."/>
            <person name="Ryu J."/>
            <person name="Kang S.K."/>
            <person name="Park C.M."/>
        </authorList>
    </citation>
    <scope>DISRUPTION PHENOTYPE</scope>
</reference>
<reference key="10">
    <citation type="journal article" date="2011" name="Curr. Biol.">
        <title>An essential protein that interacts with endosomes and promotes movement of the SHORT-ROOT transcription factor.</title>
        <authorList>
            <person name="Koizumi K."/>
            <person name="Wu S."/>
            <person name="MacRae-Crerar A."/>
            <person name="Gallagher K.L."/>
        </authorList>
    </citation>
    <scope>INTERACTION WITH SIEL</scope>
</reference>
<reference key="11">
    <citation type="journal article" date="2011" name="Plant Mol. Biol.">
        <title>Activity of transcription factor JACKDAW is essential for SHR/SCR-dependent activation of SCARECROW and MAGPIE and is modulated by reciprocal interactions with MAGPIE, SCARECROW and SHORT ROOT.</title>
        <authorList>
            <person name="Ogasawara H."/>
            <person name="Kaimi R."/>
            <person name="Colasanti J."/>
            <person name="Kozaki A."/>
        </authorList>
    </citation>
    <scope>FUNCTION</scope>
    <scope>INDUCTION</scope>
</reference>
<reference key="12">
    <citation type="journal article" date="2014" name="Proc. Natl. Acad. Sci. U.S.A.">
        <title>DELLA protein functions as a transcriptional activator through the DNA binding of the indeterminate domain family proteins.</title>
        <authorList>
            <person name="Yoshida H."/>
            <person name="Hirano K."/>
            <person name="Sato T."/>
            <person name="Mitsuda N."/>
            <person name="Nomoto M."/>
            <person name="Maeo K."/>
            <person name="Koketsu E."/>
            <person name="Mitani R."/>
            <person name="Kawamura M."/>
            <person name="Ishiguro S."/>
            <person name="Tada Y."/>
            <person name="Ohme-Takagi M."/>
            <person name="Matsuoka M."/>
            <person name="Ueguchi-Tanaka M."/>
        </authorList>
    </citation>
    <scope>FUNCTION</scope>
    <scope>INTERACTION WITH SCL3 AND RGA</scope>
    <scope>SUBCELLULAR LOCATION</scope>
</reference>
<reference key="13">
    <citation type="journal article" date="2015" name="Plant Cell">
        <title>Arabidopsis BIRD zinc finger proteins jointly stabilize tissue boundaries by confining the cell fate regulator SHORT-ROOT and contributing to fate specification.</title>
        <authorList>
            <person name="Long Y."/>
            <person name="Smet W."/>
            <person name="Cruz-Ramirez A."/>
            <person name="Castelijns B."/>
            <person name="de Jonge W."/>
            <person name="Maehoenen A.P."/>
            <person name="Bouchet B.P."/>
            <person name="Perez G.S."/>
            <person name="Akhmanova A."/>
            <person name="Scheres B."/>
            <person name="Blilou I."/>
        </authorList>
    </citation>
    <scope>FUNCTION</scope>
    <scope>DISRUPTION PHENOTYPE</scope>
    <scope>TISSUE SPECIFICITY</scope>
    <source>
        <strain>cv. Columbia</strain>
    </source>
</reference>
<feature type="chain" id="PRO_0000337841" description="Zinc finger protein MAGPIE">
    <location>
        <begin position="1"/>
        <end position="506"/>
    </location>
</feature>
<feature type="zinc finger region" description="C2H2-type 1" evidence="3">
    <location>
        <begin position="70"/>
        <end position="92"/>
    </location>
</feature>
<feature type="zinc finger region" description="C2H2-type 2" evidence="16">
    <location>
        <begin position="111"/>
        <end position="141"/>
    </location>
</feature>
<feature type="zinc finger region" description="C2H2-type 2; degenerate" evidence="3">
    <location>
        <begin position="146"/>
        <end position="169"/>
    </location>
</feature>
<feature type="zinc finger region" description="CCHC-type 2; atypical" evidence="16">
    <location>
        <begin position="173"/>
        <end position="196"/>
    </location>
</feature>
<feature type="region of interest" description="Disordered" evidence="5">
    <location>
        <begin position="1"/>
        <end position="53"/>
    </location>
</feature>
<feature type="region of interest" description="SHR-binding" evidence="1">
    <location>
        <begin position="183"/>
        <end position="195"/>
    </location>
</feature>
<feature type="short sequence motif" description="Nuclear localization signal" evidence="4">
    <location>
        <begin position="133"/>
        <end position="140"/>
    </location>
</feature>
<feature type="compositionally biased region" description="Low complexity" evidence="5">
    <location>
        <begin position="9"/>
        <end position="21"/>
    </location>
</feature>
<feature type="compositionally biased region" description="Basic and acidic residues" evidence="5">
    <location>
        <begin position="22"/>
        <end position="33"/>
    </location>
</feature>
<feature type="binding site" evidence="1">
    <location>
        <position position="148"/>
    </location>
    <ligand>
        <name>Zn(2+)</name>
        <dbReference type="ChEBI" id="CHEBI:29105"/>
        <label>1</label>
    </ligand>
</feature>
<feature type="binding site" evidence="1">
    <location>
        <position position="151"/>
    </location>
    <ligand>
        <name>Zn(2+)</name>
        <dbReference type="ChEBI" id="CHEBI:29105"/>
        <label>1</label>
    </ligand>
</feature>
<feature type="binding site" evidence="1">
    <location>
        <position position="164"/>
    </location>
    <ligand>
        <name>Zn(2+)</name>
        <dbReference type="ChEBI" id="CHEBI:29105"/>
        <label>1</label>
    </ligand>
</feature>
<feature type="binding site" evidence="1">
    <location>
        <position position="168"/>
    </location>
    <ligand>
        <name>Zn(2+)</name>
        <dbReference type="ChEBI" id="CHEBI:29105"/>
        <label>1</label>
    </ligand>
</feature>
<feature type="binding site" evidence="1">
    <location>
        <position position="175"/>
    </location>
    <ligand>
        <name>Zn(2+)</name>
        <dbReference type="ChEBI" id="CHEBI:29105"/>
        <label>2</label>
    </ligand>
</feature>
<feature type="binding site" evidence="1">
    <location>
        <position position="177"/>
    </location>
    <ligand>
        <name>Zn(2+)</name>
        <dbReference type="ChEBI" id="CHEBI:29105"/>
        <label>2</label>
    </ligand>
</feature>
<feature type="binding site" evidence="1">
    <location>
        <position position="190"/>
    </location>
    <ligand>
        <name>Zn(2+)</name>
        <dbReference type="ChEBI" id="CHEBI:29105"/>
        <label>2</label>
    </ligand>
</feature>
<feature type="binding site" evidence="1">
    <location>
        <position position="194"/>
    </location>
    <ligand>
        <name>Zn(2+)</name>
        <dbReference type="ChEBI" id="CHEBI:29105"/>
        <label>2</label>
    </ligand>
</feature>
<feature type="modified residue" description="Phosphoserine" evidence="2">
    <location>
        <position position="60"/>
    </location>
</feature>
<feature type="splice variant" id="VSP_036332" description="In isoform 2." evidence="12">
    <location>
        <begin position="50"/>
        <end position="51"/>
    </location>
</feature>
<sequence length="506" mass="55826">MTTEDQTISSSGGYVQSSSTTDHVDHHHHDQHESLNPPLVKKKRNLPGNPDPEAEVIALSPKTLMATNRFLCEICGKGFQRDQNLQLHRRGHNLPWKLKQRTSKEVRKRVYVCPEKSCVHHHPTRALGDLTGIKKHFCRKHGEKKWKCEKCAKRYAVQSDWKAHSKTCGTREYRCDCGTIFSRRDSFITHRAFCDALAEETARLNAASHLKSFAATAGSNLNYHYLMGTLIPSPSLPQPPSFPFGPPQPQHHHHHQFPITTNNFDHQDVMKPASTLSLWSGGNINHHQQVTIEDRMAPQPHSPQEDYNWVFGNANNHGELITTSDSLITHDNNINIVQSKENANGATSLSVPSLFSSVDQITQDANAASVAVANMSATALLQKAAQMGATSSTSPTTTITTDQSAYLQSFASKSNQIVEDGGSDRFFASFGSNSVELMSNNNNGLHEIGNPRNGVTVVSGMGELQNYPWKRRRVDIGNAGGGGQTRDFLGVGVQTICHSSSINGWI</sequence>
<accession>Q9ZWA6</accession>
<accession>Q700E8</accession>
<protein>
    <recommendedName>
        <fullName evidence="14">Zinc finger protein MAGPIE</fullName>
    </recommendedName>
    <alternativeName>
        <fullName evidence="16">Protein POLLEN SPECIFIC GENE 3</fullName>
    </alternativeName>
    <alternativeName>
        <fullName evidence="13">Protein indeterminate-domain 3</fullName>
        <shortName evidence="15">AtIDD3</shortName>
    </alternativeName>
</protein>
<name>IDD3_ARATH</name>
<evidence type="ECO:0000250" key="1">
    <source>
        <dbReference type="UniProtKB" id="Q700D2"/>
    </source>
</evidence>
<evidence type="ECO:0000250" key="2">
    <source>
        <dbReference type="UniProtKB" id="Q8GYC1"/>
    </source>
</evidence>
<evidence type="ECO:0000255" key="3">
    <source>
        <dbReference type="PROSITE-ProRule" id="PRU00042"/>
    </source>
</evidence>
<evidence type="ECO:0000255" key="4">
    <source>
        <dbReference type="PROSITE-ProRule" id="PRU00768"/>
    </source>
</evidence>
<evidence type="ECO:0000256" key="5">
    <source>
        <dbReference type="SAM" id="MobiDB-lite"/>
    </source>
</evidence>
<evidence type="ECO:0000269" key="6">
    <source>
    </source>
</evidence>
<evidence type="ECO:0000269" key="7">
    <source>
    </source>
</evidence>
<evidence type="ECO:0000269" key="8">
    <source>
    </source>
</evidence>
<evidence type="ECO:0000269" key="9">
    <source>
    </source>
</evidence>
<evidence type="ECO:0000269" key="10">
    <source>
    </source>
</evidence>
<evidence type="ECO:0000269" key="11">
    <source>
    </source>
</evidence>
<evidence type="ECO:0000303" key="12">
    <source>
    </source>
</evidence>
<evidence type="ECO:0000303" key="13">
    <source>
    </source>
</evidence>
<evidence type="ECO:0000303" key="14">
    <source>
    </source>
</evidence>
<evidence type="ECO:0000303" key="15">
    <source>
    </source>
</evidence>
<evidence type="ECO:0000305" key="16"/>
<evidence type="ECO:0000312" key="17">
    <source>
        <dbReference type="Araport" id="AT1G03840"/>
    </source>
</evidence>
<evidence type="ECO:0000312" key="18">
    <source>
        <dbReference type="EMBL" id="AAD10684.1"/>
    </source>
</evidence>